<feature type="chain" id="PRO_0000373218" description="Protein MGF 110-11L">
    <location>
        <begin position="1"/>
        <end position="302"/>
    </location>
</feature>
<feature type="transmembrane region" description="Helical" evidence="2">
    <location>
        <begin position="26"/>
        <end position="46"/>
    </location>
</feature>
<feature type="transmembrane region" description="Helical" evidence="2">
    <location>
        <begin position="154"/>
        <end position="174"/>
    </location>
</feature>
<feature type="transmembrane region" description="Helical" evidence="2">
    <location>
        <begin position="183"/>
        <end position="203"/>
    </location>
</feature>
<feature type="glycosylation site" description="N-linked (GlcNAc...) asparagine; by host" evidence="2">
    <location>
        <position position="97"/>
    </location>
</feature>
<feature type="glycosylation site" description="N-linked (GlcNAc...) asparagine; by host" evidence="2">
    <location>
        <position position="294"/>
    </location>
</feature>
<protein>
    <recommendedName>
        <fullName>Protein MGF 110-11L</fullName>
    </recommendedName>
</protein>
<organism>
    <name type="scientific">African swine fever virus (isolate Tick/South Africa/Pretoriuskop Pr4/1996)</name>
    <name type="common">ASFV</name>
    <dbReference type="NCBI Taxonomy" id="561443"/>
    <lineage>
        <taxon>Viruses</taxon>
        <taxon>Varidnaviria</taxon>
        <taxon>Bamfordvirae</taxon>
        <taxon>Nucleocytoviricota</taxon>
        <taxon>Pokkesviricetes</taxon>
        <taxon>Asfuvirales</taxon>
        <taxon>Asfarviridae</taxon>
        <taxon>Asfivirus</taxon>
        <taxon>African swine fever virus</taxon>
    </lineage>
</organism>
<evidence type="ECO:0000250" key="1"/>
<evidence type="ECO:0000255" key="2"/>
<evidence type="ECO:0000305" key="3"/>
<name>11011_ASFP4</name>
<reference key="1">
    <citation type="submission" date="2003-03" db="EMBL/GenBank/DDBJ databases">
        <title>African swine fever virus genomes.</title>
        <authorList>
            <person name="Kutish G.F."/>
            <person name="Rock D.L."/>
        </authorList>
    </citation>
    <scope>NUCLEOTIDE SEQUENCE [LARGE SCALE GENOMIC DNA]</scope>
</reference>
<comment type="function">
    <text evidence="1">Plays a role in virus cell tropism, and may be required for efficient virus replication in macrophages.</text>
</comment>
<comment type="subcellular location">
    <subcellularLocation>
        <location evidence="3">Host membrane</location>
        <topology evidence="3">Multi-pass membrane protein</topology>
    </subcellularLocation>
</comment>
<comment type="similarity">
    <text evidence="3">Belongs to the asfivirus MGF 110 family.</text>
</comment>
<keyword id="KW-0325">Glycoprotein</keyword>
<keyword id="KW-1043">Host membrane</keyword>
<keyword id="KW-0472">Membrane</keyword>
<keyword id="KW-0812">Transmembrane</keyword>
<keyword id="KW-1133">Transmembrane helix</keyword>
<accession>P0C9J6</accession>
<organismHost>
    <name type="scientific">Ornithodoros</name>
    <name type="common">relapsing fever ticks</name>
    <dbReference type="NCBI Taxonomy" id="6937"/>
</organismHost>
<organismHost>
    <name type="scientific">Phacochoerus aethiopicus</name>
    <name type="common">Warthog</name>
    <dbReference type="NCBI Taxonomy" id="85517"/>
</organismHost>
<organismHost>
    <name type="scientific">Phacochoerus africanus</name>
    <name type="common">Warthog</name>
    <dbReference type="NCBI Taxonomy" id="41426"/>
</organismHost>
<organismHost>
    <name type="scientific">Potamochoerus larvatus</name>
    <name type="common">Bushpig</name>
    <dbReference type="NCBI Taxonomy" id="273792"/>
</organismHost>
<organismHost>
    <name type="scientific">Sus scrofa</name>
    <name type="common">Pig</name>
    <dbReference type="NCBI Taxonomy" id="9823"/>
</organismHost>
<sequence length="302" mass="35742">MYFYKKYLHFFFVVSKFKFFLKMQVPFGCNMKGLGVLLGLFSLILAQQLPDLPRTQHPPKRELKYWCTYVPQCDFCWDCQNGICKNKIMETQLIDSNHSIVNCRVSRNSETQTCFYEISSKMPNHFSMSCSHPTPYIGNEIFMKKVGGDYMTLLTLKQYCLYFIISIAFAGCFVYAVRKNLRLNTTIKLLTLLSILVYLAQPVLNRPLSIFYTKQFLPRTYTPPTRELDYWCTYAKHCDFCWECRKGICKNKVLDDMPPFIIQNDYINKCSIARYFDRCMYFIEPKIPYIHYMNCSLPTYYG</sequence>
<dbReference type="EMBL" id="AY261363">
    <property type="status" value="NOT_ANNOTATED_CDS"/>
    <property type="molecule type" value="Genomic_DNA"/>
</dbReference>
<dbReference type="SMR" id="P0C9J6"/>
<dbReference type="Proteomes" id="UP000000859">
    <property type="component" value="Segment"/>
</dbReference>
<dbReference type="GO" id="GO:0033644">
    <property type="term" value="C:host cell membrane"/>
    <property type="evidence" value="ECO:0007669"/>
    <property type="project" value="UniProtKB-SubCell"/>
</dbReference>
<dbReference type="GO" id="GO:0016020">
    <property type="term" value="C:membrane"/>
    <property type="evidence" value="ECO:0007669"/>
    <property type="project" value="UniProtKB-KW"/>
</dbReference>
<dbReference type="InterPro" id="IPR004848">
    <property type="entry name" value="ASFV_fam_110"/>
</dbReference>
<dbReference type="Pfam" id="PF01639">
    <property type="entry name" value="v110"/>
    <property type="match status" value="2"/>
</dbReference>
<gene>
    <name type="ordered locus">Pret-022</name>
</gene>
<proteinExistence type="inferred from homology"/>